<protein>
    <recommendedName>
        <fullName evidence="1">tRNA (guanine-N(1)-)-methyltransferase</fullName>
        <ecNumber evidence="1">2.1.1.228</ecNumber>
    </recommendedName>
    <alternativeName>
        <fullName evidence="1">M1G-methyltransferase</fullName>
    </alternativeName>
    <alternativeName>
        <fullName evidence="1">tRNA [GM37] methyltransferase</fullName>
    </alternativeName>
</protein>
<feature type="chain" id="PRO_1000006508" description="tRNA (guanine-N(1)-)-methyltransferase">
    <location>
        <begin position="1"/>
        <end position="260"/>
    </location>
</feature>
<feature type="binding site" evidence="1">
    <location>
        <position position="117"/>
    </location>
    <ligand>
        <name>S-adenosyl-L-methionine</name>
        <dbReference type="ChEBI" id="CHEBI:59789"/>
    </ligand>
</feature>
<feature type="binding site" evidence="1">
    <location>
        <begin position="137"/>
        <end position="142"/>
    </location>
    <ligand>
        <name>S-adenosyl-L-methionine</name>
        <dbReference type="ChEBI" id="CHEBI:59789"/>
    </ligand>
</feature>
<proteinExistence type="inferred from homology"/>
<organism>
    <name type="scientific">Cupriavidus necator (strain ATCC 17699 / DSM 428 / KCTC 22496 / NCIMB 10442 / H16 / Stanier 337)</name>
    <name type="common">Ralstonia eutropha</name>
    <dbReference type="NCBI Taxonomy" id="381666"/>
    <lineage>
        <taxon>Bacteria</taxon>
        <taxon>Pseudomonadati</taxon>
        <taxon>Pseudomonadota</taxon>
        <taxon>Betaproteobacteria</taxon>
        <taxon>Burkholderiales</taxon>
        <taxon>Burkholderiaceae</taxon>
        <taxon>Cupriavidus</taxon>
    </lineage>
</organism>
<keyword id="KW-0963">Cytoplasm</keyword>
<keyword id="KW-0489">Methyltransferase</keyword>
<keyword id="KW-1185">Reference proteome</keyword>
<keyword id="KW-0949">S-adenosyl-L-methionine</keyword>
<keyword id="KW-0808">Transferase</keyword>
<keyword id="KW-0819">tRNA processing</keyword>
<evidence type="ECO:0000255" key="1">
    <source>
        <dbReference type="HAMAP-Rule" id="MF_00605"/>
    </source>
</evidence>
<comment type="function">
    <text evidence="1">Specifically methylates guanosine-37 in various tRNAs.</text>
</comment>
<comment type="catalytic activity">
    <reaction evidence="1">
        <text>guanosine(37) in tRNA + S-adenosyl-L-methionine = N(1)-methylguanosine(37) in tRNA + S-adenosyl-L-homocysteine + H(+)</text>
        <dbReference type="Rhea" id="RHEA:36899"/>
        <dbReference type="Rhea" id="RHEA-COMP:10145"/>
        <dbReference type="Rhea" id="RHEA-COMP:10147"/>
        <dbReference type="ChEBI" id="CHEBI:15378"/>
        <dbReference type="ChEBI" id="CHEBI:57856"/>
        <dbReference type="ChEBI" id="CHEBI:59789"/>
        <dbReference type="ChEBI" id="CHEBI:73542"/>
        <dbReference type="ChEBI" id="CHEBI:74269"/>
        <dbReference type="EC" id="2.1.1.228"/>
    </reaction>
</comment>
<comment type="subunit">
    <text evidence="1">Homodimer.</text>
</comment>
<comment type="subcellular location">
    <subcellularLocation>
        <location evidence="1">Cytoplasm</location>
    </subcellularLocation>
</comment>
<comment type="similarity">
    <text evidence="1">Belongs to the RNA methyltransferase TrmD family.</text>
</comment>
<dbReference type="EC" id="2.1.1.228" evidence="1"/>
<dbReference type="EMBL" id="AM260479">
    <property type="protein sequence ID" value="CAJ92042.1"/>
    <property type="molecule type" value="Genomic_DNA"/>
</dbReference>
<dbReference type="RefSeq" id="WP_011614780.1">
    <property type="nucleotide sequence ID" value="NC_008313.1"/>
</dbReference>
<dbReference type="SMR" id="Q0KD79"/>
<dbReference type="STRING" id="381666.H16_A0896"/>
<dbReference type="KEGG" id="reh:H16_A0896"/>
<dbReference type="PATRIC" id="fig|381666.6.peg.1269"/>
<dbReference type="eggNOG" id="COG0336">
    <property type="taxonomic scope" value="Bacteria"/>
</dbReference>
<dbReference type="HOGENOM" id="CLU_047363_0_2_4"/>
<dbReference type="OrthoDB" id="9807416at2"/>
<dbReference type="Proteomes" id="UP000008210">
    <property type="component" value="Chromosome 1"/>
</dbReference>
<dbReference type="GO" id="GO:0005829">
    <property type="term" value="C:cytosol"/>
    <property type="evidence" value="ECO:0007669"/>
    <property type="project" value="TreeGrafter"/>
</dbReference>
<dbReference type="GO" id="GO:0052906">
    <property type="term" value="F:tRNA (guanine(37)-N1)-methyltransferase activity"/>
    <property type="evidence" value="ECO:0007669"/>
    <property type="project" value="UniProtKB-UniRule"/>
</dbReference>
<dbReference type="GO" id="GO:0002939">
    <property type="term" value="P:tRNA N1-guanine methylation"/>
    <property type="evidence" value="ECO:0007669"/>
    <property type="project" value="TreeGrafter"/>
</dbReference>
<dbReference type="CDD" id="cd18080">
    <property type="entry name" value="TrmD-like"/>
    <property type="match status" value="1"/>
</dbReference>
<dbReference type="FunFam" id="1.10.1270.20:FF:000001">
    <property type="entry name" value="tRNA (guanine-N(1)-)-methyltransferase"/>
    <property type="match status" value="1"/>
</dbReference>
<dbReference type="FunFam" id="3.40.1280.10:FF:000001">
    <property type="entry name" value="tRNA (guanine-N(1)-)-methyltransferase"/>
    <property type="match status" value="1"/>
</dbReference>
<dbReference type="Gene3D" id="3.40.1280.10">
    <property type="match status" value="1"/>
</dbReference>
<dbReference type="Gene3D" id="1.10.1270.20">
    <property type="entry name" value="tRNA(m1g37)methyltransferase, domain 2"/>
    <property type="match status" value="1"/>
</dbReference>
<dbReference type="HAMAP" id="MF_00605">
    <property type="entry name" value="TrmD"/>
    <property type="match status" value="1"/>
</dbReference>
<dbReference type="InterPro" id="IPR029028">
    <property type="entry name" value="Alpha/beta_knot_MTases"/>
</dbReference>
<dbReference type="InterPro" id="IPR023148">
    <property type="entry name" value="tRNA_m1G_MeTrfase_C_sf"/>
</dbReference>
<dbReference type="InterPro" id="IPR002649">
    <property type="entry name" value="tRNA_m1G_MeTrfase_TrmD"/>
</dbReference>
<dbReference type="InterPro" id="IPR029026">
    <property type="entry name" value="tRNA_m1G_MTases_N"/>
</dbReference>
<dbReference type="InterPro" id="IPR016009">
    <property type="entry name" value="tRNA_MeTrfase_TRMD/TRM10"/>
</dbReference>
<dbReference type="NCBIfam" id="NF000648">
    <property type="entry name" value="PRK00026.1"/>
    <property type="match status" value="1"/>
</dbReference>
<dbReference type="NCBIfam" id="TIGR00088">
    <property type="entry name" value="trmD"/>
    <property type="match status" value="1"/>
</dbReference>
<dbReference type="PANTHER" id="PTHR46417">
    <property type="entry name" value="TRNA (GUANINE-N(1)-)-METHYLTRANSFERASE"/>
    <property type="match status" value="1"/>
</dbReference>
<dbReference type="PANTHER" id="PTHR46417:SF1">
    <property type="entry name" value="TRNA (GUANINE-N(1)-)-METHYLTRANSFERASE"/>
    <property type="match status" value="1"/>
</dbReference>
<dbReference type="Pfam" id="PF01746">
    <property type="entry name" value="tRNA_m1G_MT"/>
    <property type="match status" value="1"/>
</dbReference>
<dbReference type="PIRSF" id="PIRSF000386">
    <property type="entry name" value="tRNA_mtase"/>
    <property type="match status" value="1"/>
</dbReference>
<dbReference type="SUPFAM" id="SSF75217">
    <property type="entry name" value="alpha/beta knot"/>
    <property type="match status" value="1"/>
</dbReference>
<accession>Q0KD79</accession>
<name>TRMD_CUPNH</name>
<gene>
    <name evidence="1" type="primary">trmD</name>
    <name type="ordered locus">H16_A0896</name>
</gene>
<reference key="1">
    <citation type="journal article" date="2006" name="Nat. Biotechnol.">
        <title>Genome sequence of the bioplastic-producing 'Knallgas' bacterium Ralstonia eutropha H16.</title>
        <authorList>
            <person name="Pohlmann A."/>
            <person name="Fricke W.F."/>
            <person name="Reinecke F."/>
            <person name="Kusian B."/>
            <person name="Liesegang H."/>
            <person name="Cramm R."/>
            <person name="Eitinger T."/>
            <person name="Ewering C."/>
            <person name="Poetter M."/>
            <person name="Schwartz E."/>
            <person name="Strittmatter A."/>
            <person name="Voss I."/>
            <person name="Gottschalk G."/>
            <person name="Steinbuechel A."/>
            <person name="Friedrich B."/>
            <person name="Bowien B."/>
        </authorList>
    </citation>
    <scope>NUCLEOTIDE SEQUENCE [LARGE SCALE GENOMIC DNA]</scope>
    <source>
        <strain>ATCC 17699 / DSM 428 / KCTC 22496 / NCIMB 10442 / H16 / Stanier 337</strain>
    </source>
</reference>
<sequence length="260" mass="28780">MQFDVITLFPDMFRALTDWGITSRAAKQQRYGLRTWNPRDFTVDNYRTIDDRPYGGGPGMVMLAKPLDDAIDAAVAAQAQAGVPEPHVVLMSPQGKTLSHAKVMELAERPGLVLLCGRYEAIDQRLIDRRVDEEISLGDFVLSGGELPAMALIDAVVRHLPGVLGDAQSAVQDSFVNGLLDCPHYTRPEEYEGVRVPEILLGGHHAEIEKWRRQQALANTASKRPDLIEAARKQGLLTRADEKFLSEWAAKEGRGETPAR</sequence>